<accession>B2V900</accession>
<comment type="function">
    <text evidence="1">Involved in mRNA degradation. Catalyzes the phosphorolysis of single-stranded polyribonucleotides processively in the 3'- to 5'-direction.</text>
</comment>
<comment type="catalytic activity">
    <reaction evidence="1">
        <text>RNA(n+1) + phosphate = RNA(n) + a ribonucleoside 5'-diphosphate</text>
        <dbReference type="Rhea" id="RHEA:22096"/>
        <dbReference type="Rhea" id="RHEA-COMP:14527"/>
        <dbReference type="Rhea" id="RHEA-COMP:17342"/>
        <dbReference type="ChEBI" id="CHEBI:43474"/>
        <dbReference type="ChEBI" id="CHEBI:57930"/>
        <dbReference type="ChEBI" id="CHEBI:140395"/>
        <dbReference type="EC" id="2.7.7.8"/>
    </reaction>
</comment>
<comment type="cofactor">
    <cofactor evidence="1">
        <name>Mg(2+)</name>
        <dbReference type="ChEBI" id="CHEBI:18420"/>
    </cofactor>
</comment>
<comment type="subcellular location">
    <subcellularLocation>
        <location evidence="1">Cytoplasm</location>
    </subcellularLocation>
</comment>
<comment type="similarity">
    <text evidence="1">Belongs to the polyribonucleotide nucleotidyltransferase family.</text>
</comment>
<evidence type="ECO:0000255" key="1">
    <source>
        <dbReference type="HAMAP-Rule" id="MF_01595"/>
    </source>
</evidence>
<feature type="chain" id="PRO_1000185758" description="Polyribonucleotide nucleotidyltransferase">
    <location>
        <begin position="1"/>
        <end position="703"/>
    </location>
</feature>
<feature type="domain" description="KH" evidence="1">
    <location>
        <begin position="551"/>
        <end position="610"/>
    </location>
</feature>
<feature type="domain" description="S1 motif" evidence="1">
    <location>
        <begin position="620"/>
        <end position="688"/>
    </location>
</feature>
<feature type="binding site" evidence="1">
    <location>
        <position position="484"/>
    </location>
    <ligand>
        <name>Mg(2+)</name>
        <dbReference type="ChEBI" id="CHEBI:18420"/>
    </ligand>
</feature>
<feature type="binding site" evidence="1">
    <location>
        <position position="490"/>
    </location>
    <ligand>
        <name>Mg(2+)</name>
        <dbReference type="ChEBI" id="CHEBI:18420"/>
    </ligand>
</feature>
<gene>
    <name evidence="1" type="primary">pnp</name>
    <name type="ordered locus">SYO3AOP1_0790</name>
</gene>
<dbReference type="EC" id="2.7.7.8" evidence="1"/>
<dbReference type="EMBL" id="CP001080">
    <property type="protein sequence ID" value="ACD66423.1"/>
    <property type="molecule type" value="Genomic_DNA"/>
</dbReference>
<dbReference type="RefSeq" id="WP_012459500.1">
    <property type="nucleotide sequence ID" value="NC_010730.1"/>
</dbReference>
<dbReference type="SMR" id="B2V900"/>
<dbReference type="STRING" id="436114.SYO3AOP1_0790"/>
<dbReference type="KEGG" id="sul:SYO3AOP1_0790"/>
<dbReference type="eggNOG" id="COG1185">
    <property type="taxonomic scope" value="Bacteria"/>
</dbReference>
<dbReference type="HOGENOM" id="CLU_004217_2_2_0"/>
<dbReference type="GO" id="GO:0005829">
    <property type="term" value="C:cytosol"/>
    <property type="evidence" value="ECO:0007669"/>
    <property type="project" value="TreeGrafter"/>
</dbReference>
<dbReference type="GO" id="GO:0000175">
    <property type="term" value="F:3'-5'-RNA exonuclease activity"/>
    <property type="evidence" value="ECO:0007669"/>
    <property type="project" value="TreeGrafter"/>
</dbReference>
<dbReference type="GO" id="GO:0000287">
    <property type="term" value="F:magnesium ion binding"/>
    <property type="evidence" value="ECO:0007669"/>
    <property type="project" value="UniProtKB-UniRule"/>
</dbReference>
<dbReference type="GO" id="GO:0004654">
    <property type="term" value="F:polyribonucleotide nucleotidyltransferase activity"/>
    <property type="evidence" value="ECO:0007669"/>
    <property type="project" value="UniProtKB-UniRule"/>
</dbReference>
<dbReference type="GO" id="GO:0003723">
    <property type="term" value="F:RNA binding"/>
    <property type="evidence" value="ECO:0007669"/>
    <property type="project" value="UniProtKB-UniRule"/>
</dbReference>
<dbReference type="GO" id="GO:0006402">
    <property type="term" value="P:mRNA catabolic process"/>
    <property type="evidence" value="ECO:0007669"/>
    <property type="project" value="UniProtKB-UniRule"/>
</dbReference>
<dbReference type="GO" id="GO:0006396">
    <property type="term" value="P:RNA processing"/>
    <property type="evidence" value="ECO:0007669"/>
    <property type="project" value="InterPro"/>
</dbReference>
<dbReference type="CDD" id="cd02393">
    <property type="entry name" value="KH-I_PNPase"/>
    <property type="match status" value="1"/>
</dbReference>
<dbReference type="CDD" id="cd11363">
    <property type="entry name" value="RNase_PH_PNPase_1"/>
    <property type="match status" value="1"/>
</dbReference>
<dbReference type="CDD" id="cd11364">
    <property type="entry name" value="RNase_PH_PNPase_2"/>
    <property type="match status" value="1"/>
</dbReference>
<dbReference type="CDD" id="cd04472">
    <property type="entry name" value="S1_PNPase"/>
    <property type="match status" value="1"/>
</dbReference>
<dbReference type="FunFam" id="3.30.1370.10:FF:000001">
    <property type="entry name" value="Polyribonucleotide nucleotidyltransferase"/>
    <property type="match status" value="1"/>
</dbReference>
<dbReference type="FunFam" id="3.30.230.70:FF:000001">
    <property type="entry name" value="Polyribonucleotide nucleotidyltransferase"/>
    <property type="match status" value="1"/>
</dbReference>
<dbReference type="FunFam" id="3.30.230.70:FF:000002">
    <property type="entry name" value="Polyribonucleotide nucleotidyltransferase"/>
    <property type="match status" value="1"/>
</dbReference>
<dbReference type="FunFam" id="2.40.50.140:FF:000189">
    <property type="entry name" value="Polyribonucleotide nucleotidyltransferase, putative"/>
    <property type="match status" value="1"/>
</dbReference>
<dbReference type="Gene3D" id="3.30.230.70">
    <property type="entry name" value="GHMP Kinase, N-terminal domain"/>
    <property type="match status" value="2"/>
</dbReference>
<dbReference type="Gene3D" id="3.30.1370.10">
    <property type="entry name" value="K Homology domain, type 1"/>
    <property type="match status" value="1"/>
</dbReference>
<dbReference type="Gene3D" id="2.40.50.140">
    <property type="entry name" value="Nucleic acid-binding proteins"/>
    <property type="match status" value="1"/>
</dbReference>
<dbReference type="HAMAP" id="MF_01595">
    <property type="entry name" value="PNPase"/>
    <property type="match status" value="1"/>
</dbReference>
<dbReference type="InterPro" id="IPR001247">
    <property type="entry name" value="ExoRNase_PH_dom1"/>
</dbReference>
<dbReference type="InterPro" id="IPR015847">
    <property type="entry name" value="ExoRNase_PH_dom2"/>
</dbReference>
<dbReference type="InterPro" id="IPR036345">
    <property type="entry name" value="ExoRNase_PH_dom2_sf"/>
</dbReference>
<dbReference type="InterPro" id="IPR004087">
    <property type="entry name" value="KH_dom"/>
</dbReference>
<dbReference type="InterPro" id="IPR004088">
    <property type="entry name" value="KH_dom_type_1"/>
</dbReference>
<dbReference type="InterPro" id="IPR036612">
    <property type="entry name" value="KH_dom_type_1_sf"/>
</dbReference>
<dbReference type="InterPro" id="IPR012340">
    <property type="entry name" value="NA-bd_OB-fold"/>
</dbReference>
<dbReference type="InterPro" id="IPR012162">
    <property type="entry name" value="PNPase"/>
</dbReference>
<dbReference type="InterPro" id="IPR027408">
    <property type="entry name" value="PNPase/RNase_PH_dom_sf"/>
</dbReference>
<dbReference type="InterPro" id="IPR015848">
    <property type="entry name" value="PNPase_PH_RNA-bd_bac/org-type"/>
</dbReference>
<dbReference type="InterPro" id="IPR036456">
    <property type="entry name" value="PNPase_PH_RNA-bd_sf"/>
</dbReference>
<dbReference type="InterPro" id="IPR020568">
    <property type="entry name" value="Ribosomal_Su5_D2-typ_SF"/>
</dbReference>
<dbReference type="InterPro" id="IPR003029">
    <property type="entry name" value="S1_domain"/>
</dbReference>
<dbReference type="NCBIfam" id="TIGR03591">
    <property type="entry name" value="polynuc_phos"/>
    <property type="match status" value="1"/>
</dbReference>
<dbReference type="NCBIfam" id="NF008805">
    <property type="entry name" value="PRK11824.1"/>
    <property type="match status" value="1"/>
</dbReference>
<dbReference type="PANTHER" id="PTHR11252">
    <property type="entry name" value="POLYRIBONUCLEOTIDE NUCLEOTIDYLTRANSFERASE"/>
    <property type="match status" value="1"/>
</dbReference>
<dbReference type="PANTHER" id="PTHR11252:SF0">
    <property type="entry name" value="POLYRIBONUCLEOTIDE NUCLEOTIDYLTRANSFERASE 1, MITOCHONDRIAL"/>
    <property type="match status" value="1"/>
</dbReference>
<dbReference type="Pfam" id="PF00013">
    <property type="entry name" value="KH_1"/>
    <property type="match status" value="1"/>
</dbReference>
<dbReference type="Pfam" id="PF03726">
    <property type="entry name" value="PNPase"/>
    <property type="match status" value="1"/>
</dbReference>
<dbReference type="Pfam" id="PF01138">
    <property type="entry name" value="RNase_PH"/>
    <property type="match status" value="2"/>
</dbReference>
<dbReference type="Pfam" id="PF03725">
    <property type="entry name" value="RNase_PH_C"/>
    <property type="match status" value="2"/>
</dbReference>
<dbReference type="Pfam" id="PF00575">
    <property type="entry name" value="S1"/>
    <property type="match status" value="1"/>
</dbReference>
<dbReference type="PIRSF" id="PIRSF005499">
    <property type="entry name" value="PNPase"/>
    <property type="match status" value="1"/>
</dbReference>
<dbReference type="SMART" id="SM00322">
    <property type="entry name" value="KH"/>
    <property type="match status" value="1"/>
</dbReference>
<dbReference type="SMART" id="SM00316">
    <property type="entry name" value="S1"/>
    <property type="match status" value="1"/>
</dbReference>
<dbReference type="SUPFAM" id="SSF54791">
    <property type="entry name" value="Eukaryotic type KH-domain (KH-domain type I)"/>
    <property type="match status" value="1"/>
</dbReference>
<dbReference type="SUPFAM" id="SSF50249">
    <property type="entry name" value="Nucleic acid-binding proteins"/>
    <property type="match status" value="1"/>
</dbReference>
<dbReference type="SUPFAM" id="SSF46915">
    <property type="entry name" value="Polynucleotide phosphorylase/guanosine pentaphosphate synthase (PNPase/GPSI), domain 3"/>
    <property type="match status" value="1"/>
</dbReference>
<dbReference type="SUPFAM" id="SSF55666">
    <property type="entry name" value="Ribonuclease PH domain 2-like"/>
    <property type="match status" value="2"/>
</dbReference>
<dbReference type="SUPFAM" id="SSF54211">
    <property type="entry name" value="Ribosomal protein S5 domain 2-like"/>
    <property type="match status" value="2"/>
</dbReference>
<dbReference type="PROSITE" id="PS50084">
    <property type="entry name" value="KH_TYPE_1"/>
    <property type="match status" value="1"/>
</dbReference>
<dbReference type="PROSITE" id="PS50126">
    <property type="entry name" value="S1"/>
    <property type="match status" value="1"/>
</dbReference>
<name>PNP_SULSY</name>
<proteinExistence type="inferred from homology"/>
<organism>
    <name type="scientific">Sulfurihydrogenibium sp. (strain YO3AOP1)</name>
    <dbReference type="NCBI Taxonomy" id="436114"/>
    <lineage>
        <taxon>Bacteria</taxon>
        <taxon>Pseudomonadati</taxon>
        <taxon>Aquificota</taxon>
        <taxon>Aquificia</taxon>
        <taxon>Aquificales</taxon>
        <taxon>Hydrogenothermaceae</taxon>
        <taxon>Sulfurihydrogenibium</taxon>
    </lineage>
</organism>
<reference key="1">
    <citation type="journal article" date="2009" name="J. Bacteriol.">
        <title>Complete and draft genome sequences of six members of the Aquificales.</title>
        <authorList>
            <person name="Reysenbach A.-L."/>
            <person name="Hamamura N."/>
            <person name="Podar M."/>
            <person name="Griffiths E."/>
            <person name="Ferreira S."/>
            <person name="Hochstein R."/>
            <person name="Heidelberg J."/>
            <person name="Johnson J."/>
            <person name="Mead D."/>
            <person name="Pohorille A."/>
            <person name="Sarmiento M."/>
            <person name="Schweighofer K."/>
            <person name="Seshadri R."/>
            <person name="Voytek M.A."/>
        </authorList>
    </citation>
    <scope>NUCLEOTIDE SEQUENCE [LARGE SCALE GENOMIC DNA]</scope>
    <source>
        <strain>YO3AOP1</strain>
    </source>
</reference>
<keyword id="KW-0963">Cytoplasm</keyword>
<keyword id="KW-0460">Magnesium</keyword>
<keyword id="KW-0479">Metal-binding</keyword>
<keyword id="KW-0548">Nucleotidyltransferase</keyword>
<keyword id="KW-0694">RNA-binding</keyword>
<keyword id="KW-0808">Transferase</keyword>
<protein>
    <recommendedName>
        <fullName evidence="1">Polyribonucleotide nucleotidyltransferase</fullName>
        <ecNumber evidence="1">2.7.7.8</ecNumber>
    </recommendedName>
    <alternativeName>
        <fullName evidence="1">Polynucleotide phosphorylase</fullName>
        <shortName evidence="1">PNPase</shortName>
    </alternativeName>
</protein>
<sequence>MEEIKIETVVNGAPYSIETGYFAKQANGAVIVRQGDTAVLVAAVMSEEPQADIDFLPLTVEYREKYYAYGKIPGGFVKREGKPSEREILVARNIDRPIRPLFPKGFYNDVIITAYTLSADDQYDPDVLGIVGASAALHISDIPFEGPIAGVRVCRVDGQFIVNPTYQQKAKSDLEIVVAGSKDAIVMVEGGAKEVPEEVILEAMLFGHQEIKKLIELQEELRAKYGKEKIEIPIDEEEILLKEKFKELAYVRIKEAFNISDKKERNKQINAIFEEIKTTLEIPEEKVKKASFVYKDVVSNVMRDLVLYENIRIDGRKPEEIRPIWIKVGVFPRNHGSAIFTRGQTQAFVTVTLGSPSEGQIEESIEAGETLKRFMLHYNFPPFSTGEAKPPRPVSRREIGHGNLAERALEPLIPSEEEFPYVIRVVSDILESNGSTSMATVCGGSLALFDAGVPMKKHVAGIAMGLIKSEDKFVVLSDILGDEDHLGDMDFKVAGTRDGVTSIQMDIKVKGLTREILQKALEQAREGRNYILDLMYQAIPEPRKELSPYAPTVTTLRVLPEKISVIIGPAGKNIKKIIEETGVKIDLDPTGLVKIYATSKIAAEKAIDMINQLIMDIELGEVYLGKVTRVEDYGAFVELMPGKLSLLHVSQISSERLKSAKDVVKVGDVLKVKVSEIDDQGRIKVSLKDVPENVEAKNKFLFE</sequence>